<keyword id="KW-0067">ATP-binding</keyword>
<keyword id="KW-0436">Ligase</keyword>
<keyword id="KW-0479">Metal-binding</keyword>
<keyword id="KW-0547">Nucleotide-binding</keyword>
<keyword id="KW-0671">Queuosine biosynthesis</keyword>
<keyword id="KW-1185">Reference proteome</keyword>
<keyword id="KW-0862">Zinc</keyword>
<protein>
    <recommendedName>
        <fullName evidence="1">7-cyano-7-deazaguanine synthase</fullName>
        <ecNumber evidence="1">6.3.4.20</ecNumber>
    </recommendedName>
    <alternativeName>
        <fullName evidence="1">7-cyano-7-carbaguanine synthase</fullName>
    </alternativeName>
    <alternativeName>
        <fullName evidence="1">PreQ(0) synthase</fullName>
    </alternativeName>
    <alternativeName>
        <fullName evidence="1">Queuosine biosynthesis protein QueC</fullName>
    </alternativeName>
</protein>
<sequence length="243" mass="26969">MHTTALVLFSGGQDSTTCLALALSKYQRVETIAFDYRQRHLVELDARLIVLNEIRARFPQWASKLGEDHLLDLAVLGEVSDTSLTRDTAFKMEQSGLPNTFVPGRNLLFLTLAAAVAYRRDLQVMVTGVCETDFSGYPDCRDDTIKAMQLALSLGMDKRFLIETPLMWIDKAATWALAYELGEKSGTPGGGQALVDLIIEHTHTCYLGDRQHRHAWGYGCGSCPACELRARGYERYCAARTAG</sequence>
<feature type="chain" id="PRO_0000246904" description="7-cyano-7-deazaguanine synthase">
    <location>
        <begin position="1"/>
        <end position="243"/>
    </location>
</feature>
<feature type="binding site" evidence="1">
    <location>
        <begin position="9"/>
        <end position="19"/>
    </location>
    <ligand>
        <name>ATP</name>
        <dbReference type="ChEBI" id="CHEBI:30616"/>
    </ligand>
</feature>
<feature type="binding site" evidence="1">
    <location>
        <position position="205"/>
    </location>
    <ligand>
        <name>Zn(2+)</name>
        <dbReference type="ChEBI" id="CHEBI:29105"/>
    </ligand>
</feature>
<feature type="binding site" evidence="1">
    <location>
        <position position="220"/>
    </location>
    <ligand>
        <name>Zn(2+)</name>
        <dbReference type="ChEBI" id="CHEBI:29105"/>
    </ligand>
</feature>
<feature type="binding site" evidence="1">
    <location>
        <position position="223"/>
    </location>
    <ligand>
        <name>Zn(2+)</name>
        <dbReference type="ChEBI" id="CHEBI:29105"/>
    </ligand>
</feature>
<feature type="binding site" evidence="1">
    <location>
        <position position="226"/>
    </location>
    <ligand>
        <name>Zn(2+)</name>
        <dbReference type="ChEBI" id="CHEBI:29105"/>
    </ligand>
</feature>
<evidence type="ECO:0000255" key="1">
    <source>
        <dbReference type="HAMAP-Rule" id="MF_01633"/>
    </source>
</evidence>
<name>QUEC_ALBFT</name>
<proteinExistence type="inferred from homology"/>
<gene>
    <name evidence="1" type="primary">queC</name>
    <name type="ordered locus">Rfer_0736</name>
</gene>
<dbReference type="EC" id="6.3.4.20" evidence="1"/>
<dbReference type="EMBL" id="CP000267">
    <property type="protein sequence ID" value="ABD68486.1"/>
    <property type="molecule type" value="Genomic_DNA"/>
</dbReference>
<dbReference type="RefSeq" id="WP_011463059.1">
    <property type="nucleotide sequence ID" value="NC_007908.1"/>
</dbReference>
<dbReference type="SMR" id="Q220R7"/>
<dbReference type="STRING" id="338969.Rfer_0736"/>
<dbReference type="KEGG" id="rfr:Rfer_0736"/>
<dbReference type="eggNOG" id="COG0603">
    <property type="taxonomic scope" value="Bacteria"/>
</dbReference>
<dbReference type="HOGENOM" id="CLU_081854_0_0_4"/>
<dbReference type="OrthoDB" id="9789567at2"/>
<dbReference type="UniPathway" id="UPA00391"/>
<dbReference type="Proteomes" id="UP000008332">
    <property type="component" value="Chromosome"/>
</dbReference>
<dbReference type="GO" id="GO:0005524">
    <property type="term" value="F:ATP binding"/>
    <property type="evidence" value="ECO:0007669"/>
    <property type="project" value="UniProtKB-UniRule"/>
</dbReference>
<dbReference type="GO" id="GO:0016879">
    <property type="term" value="F:ligase activity, forming carbon-nitrogen bonds"/>
    <property type="evidence" value="ECO:0007669"/>
    <property type="project" value="UniProtKB-UniRule"/>
</dbReference>
<dbReference type="GO" id="GO:0008270">
    <property type="term" value="F:zinc ion binding"/>
    <property type="evidence" value="ECO:0007669"/>
    <property type="project" value="UniProtKB-UniRule"/>
</dbReference>
<dbReference type="GO" id="GO:0008616">
    <property type="term" value="P:queuosine biosynthetic process"/>
    <property type="evidence" value="ECO:0007669"/>
    <property type="project" value="UniProtKB-UniRule"/>
</dbReference>
<dbReference type="CDD" id="cd01995">
    <property type="entry name" value="QueC-like"/>
    <property type="match status" value="1"/>
</dbReference>
<dbReference type="Gene3D" id="3.40.50.620">
    <property type="entry name" value="HUPs"/>
    <property type="match status" value="1"/>
</dbReference>
<dbReference type="HAMAP" id="MF_01633">
    <property type="entry name" value="QueC"/>
    <property type="match status" value="1"/>
</dbReference>
<dbReference type="InterPro" id="IPR018317">
    <property type="entry name" value="QueC"/>
</dbReference>
<dbReference type="InterPro" id="IPR014729">
    <property type="entry name" value="Rossmann-like_a/b/a_fold"/>
</dbReference>
<dbReference type="NCBIfam" id="TIGR00364">
    <property type="entry name" value="7-cyano-7-deazaguanine synthase QueC"/>
    <property type="match status" value="1"/>
</dbReference>
<dbReference type="PANTHER" id="PTHR42914">
    <property type="entry name" value="7-CYANO-7-DEAZAGUANINE SYNTHASE"/>
    <property type="match status" value="1"/>
</dbReference>
<dbReference type="PANTHER" id="PTHR42914:SF1">
    <property type="entry name" value="7-CYANO-7-DEAZAGUANINE SYNTHASE"/>
    <property type="match status" value="1"/>
</dbReference>
<dbReference type="Pfam" id="PF06508">
    <property type="entry name" value="QueC"/>
    <property type="match status" value="1"/>
</dbReference>
<dbReference type="PIRSF" id="PIRSF006293">
    <property type="entry name" value="ExsB"/>
    <property type="match status" value="1"/>
</dbReference>
<dbReference type="SUPFAM" id="SSF52402">
    <property type="entry name" value="Adenine nucleotide alpha hydrolases-like"/>
    <property type="match status" value="1"/>
</dbReference>
<organism>
    <name type="scientific">Albidiferax ferrireducens (strain ATCC BAA-621 / DSM 15236 / T118)</name>
    <name type="common">Rhodoferax ferrireducens</name>
    <dbReference type="NCBI Taxonomy" id="338969"/>
    <lineage>
        <taxon>Bacteria</taxon>
        <taxon>Pseudomonadati</taxon>
        <taxon>Pseudomonadota</taxon>
        <taxon>Betaproteobacteria</taxon>
        <taxon>Burkholderiales</taxon>
        <taxon>Comamonadaceae</taxon>
        <taxon>Rhodoferax</taxon>
    </lineage>
</organism>
<comment type="function">
    <text evidence="1">Catalyzes the ATP-dependent conversion of 7-carboxy-7-deazaguanine (CDG) to 7-cyano-7-deazaguanine (preQ(0)).</text>
</comment>
<comment type="catalytic activity">
    <reaction evidence="1">
        <text>7-carboxy-7-deazaguanine + NH4(+) + ATP = 7-cyano-7-deazaguanine + ADP + phosphate + H2O + H(+)</text>
        <dbReference type="Rhea" id="RHEA:27982"/>
        <dbReference type="ChEBI" id="CHEBI:15377"/>
        <dbReference type="ChEBI" id="CHEBI:15378"/>
        <dbReference type="ChEBI" id="CHEBI:28938"/>
        <dbReference type="ChEBI" id="CHEBI:30616"/>
        <dbReference type="ChEBI" id="CHEBI:43474"/>
        <dbReference type="ChEBI" id="CHEBI:45075"/>
        <dbReference type="ChEBI" id="CHEBI:61036"/>
        <dbReference type="ChEBI" id="CHEBI:456216"/>
        <dbReference type="EC" id="6.3.4.20"/>
    </reaction>
</comment>
<comment type="cofactor">
    <cofactor evidence="1">
        <name>Zn(2+)</name>
        <dbReference type="ChEBI" id="CHEBI:29105"/>
    </cofactor>
    <text evidence="1">Binds 1 zinc ion per subunit.</text>
</comment>
<comment type="pathway">
    <text evidence="1">Purine metabolism; 7-cyano-7-deazaguanine biosynthesis.</text>
</comment>
<comment type="similarity">
    <text evidence="1">Belongs to the QueC family.</text>
</comment>
<reference key="1">
    <citation type="submission" date="2006-02" db="EMBL/GenBank/DDBJ databases">
        <title>Complete sequence of chromosome of Rhodoferax ferrireducens DSM 15236.</title>
        <authorList>
            <person name="Copeland A."/>
            <person name="Lucas S."/>
            <person name="Lapidus A."/>
            <person name="Barry K."/>
            <person name="Detter J.C."/>
            <person name="Glavina del Rio T."/>
            <person name="Hammon N."/>
            <person name="Israni S."/>
            <person name="Pitluck S."/>
            <person name="Brettin T."/>
            <person name="Bruce D."/>
            <person name="Han C."/>
            <person name="Tapia R."/>
            <person name="Gilna P."/>
            <person name="Kiss H."/>
            <person name="Schmutz J."/>
            <person name="Larimer F."/>
            <person name="Land M."/>
            <person name="Kyrpides N."/>
            <person name="Ivanova N."/>
            <person name="Richardson P."/>
        </authorList>
    </citation>
    <scope>NUCLEOTIDE SEQUENCE [LARGE SCALE GENOMIC DNA]</scope>
    <source>
        <strain>ATCC BAA-621 / DSM 15236 / T118</strain>
    </source>
</reference>
<accession>Q220R7</accession>